<proteinExistence type="inferred from homology"/>
<sequence>MKITRFGVSVPDELLEKFDRIIEEKGYVNRSEAIRDLMRDFIVRHEWEEGDREVAGTITIVYNHDEADVVKELLELQHDYVDEIVSSLHVHMDEHNCLEVVVVKGKAGRIKEIAERLISLKGVKHGKLVMTTTGRELV</sequence>
<accession>B6YSU8</accession>
<dbReference type="EMBL" id="CP000855">
    <property type="protein sequence ID" value="ACJ15635.1"/>
    <property type="molecule type" value="Genomic_DNA"/>
</dbReference>
<dbReference type="RefSeq" id="WP_012571108.1">
    <property type="nucleotide sequence ID" value="NC_011529.1"/>
</dbReference>
<dbReference type="SMR" id="B6YSU8"/>
<dbReference type="STRING" id="523850.TON_0150"/>
<dbReference type="GeneID" id="7017804"/>
<dbReference type="KEGG" id="ton:TON_0150"/>
<dbReference type="PATRIC" id="fig|523850.10.peg.150"/>
<dbReference type="eggNOG" id="arCOG01008">
    <property type="taxonomic scope" value="Archaea"/>
</dbReference>
<dbReference type="HOGENOM" id="CLU_113319_1_2_2"/>
<dbReference type="OrthoDB" id="25654at2157"/>
<dbReference type="Proteomes" id="UP000002727">
    <property type="component" value="Chromosome"/>
</dbReference>
<dbReference type="GO" id="GO:0003677">
    <property type="term" value="F:DNA binding"/>
    <property type="evidence" value="ECO:0007669"/>
    <property type="project" value="UniProtKB-KW"/>
</dbReference>
<dbReference type="GO" id="GO:0003700">
    <property type="term" value="F:DNA-binding transcription factor activity"/>
    <property type="evidence" value="ECO:0007669"/>
    <property type="project" value="UniProtKB-UniRule"/>
</dbReference>
<dbReference type="GO" id="GO:0016151">
    <property type="term" value="F:nickel cation binding"/>
    <property type="evidence" value="ECO:0007669"/>
    <property type="project" value="UniProtKB-UniRule"/>
</dbReference>
<dbReference type="GO" id="GO:0010045">
    <property type="term" value="P:response to nickel cation"/>
    <property type="evidence" value="ECO:0007669"/>
    <property type="project" value="InterPro"/>
</dbReference>
<dbReference type="CDD" id="cd22231">
    <property type="entry name" value="RHH_NikR_HicB-like"/>
    <property type="match status" value="1"/>
</dbReference>
<dbReference type="Gene3D" id="3.30.70.1150">
    <property type="entry name" value="ACT-like. Chain A, domain 2"/>
    <property type="match status" value="1"/>
</dbReference>
<dbReference type="Gene3D" id="1.10.1220.10">
    <property type="entry name" value="Met repressor-like"/>
    <property type="match status" value="1"/>
</dbReference>
<dbReference type="HAMAP" id="MF_00476">
    <property type="entry name" value="NikR"/>
    <property type="match status" value="1"/>
</dbReference>
<dbReference type="InterPro" id="IPR027271">
    <property type="entry name" value="Acetolactate_synth/TF_NikR_C"/>
</dbReference>
<dbReference type="InterPro" id="IPR045865">
    <property type="entry name" value="ACT-like_dom_sf"/>
</dbReference>
<dbReference type="InterPro" id="IPR013321">
    <property type="entry name" value="Arc_rbn_hlx_hlx"/>
</dbReference>
<dbReference type="InterPro" id="IPR002145">
    <property type="entry name" value="CopG"/>
</dbReference>
<dbReference type="InterPro" id="IPR050192">
    <property type="entry name" value="CopG/NikR_regulator"/>
</dbReference>
<dbReference type="InterPro" id="IPR022988">
    <property type="entry name" value="Ni_resp_reg_NikR"/>
</dbReference>
<dbReference type="InterPro" id="IPR010985">
    <property type="entry name" value="Ribbon_hlx_hlx"/>
</dbReference>
<dbReference type="InterPro" id="IPR014864">
    <property type="entry name" value="TF_NikR_Ni-bd_C"/>
</dbReference>
<dbReference type="NCBIfam" id="NF001884">
    <property type="entry name" value="PRK00630.1"/>
    <property type="match status" value="1"/>
</dbReference>
<dbReference type="NCBIfam" id="NF002169">
    <property type="entry name" value="PRK01002.1"/>
    <property type="match status" value="1"/>
</dbReference>
<dbReference type="NCBIfam" id="NF002815">
    <property type="entry name" value="PRK02967.1"/>
    <property type="match status" value="1"/>
</dbReference>
<dbReference type="NCBIfam" id="NF003381">
    <property type="entry name" value="PRK04460.1"/>
    <property type="match status" value="1"/>
</dbReference>
<dbReference type="PANTHER" id="PTHR34719">
    <property type="entry name" value="NICKEL-RESPONSIVE REGULATOR"/>
    <property type="match status" value="1"/>
</dbReference>
<dbReference type="PANTHER" id="PTHR34719:SF2">
    <property type="entry name" value="NICKEL-RESPONSIVE REGULATOR"/>
    <property type="match status" value="1"/>
</dbReference>
<dbReference type="Pfam" id="PF08753">
    <property type="entry name" value="NikR_C"/>
    <property type="match status" value="1"/>
</dbReference>
<dbReference type="Pfam" id="PF01402">
    <property type="entry name" value="RHH_1"/>
    <property type="match status" value="1"/>
</dbReference>
<dbReference type="SUPFAM" id="SSF55021">
    <property type="entry name" value="ACT-like"/>
    <property type="match status" value="1"/>
</dbReference>
<dbReference type="SUPFAM" id="SSF47598">
    <property type="entry name" value="Ribbon-helix-helix"/>
    <property type="match status" value="1"/>
</dbReference>
<name>NIKR_THEON</name>
<evidence type="ECO:0000255" key="1">
    <source>
        <dbReference type="HAMAP-Rule" id="MF_00476"/>
    </source>
</evidence>
<organism>
    <name type="scientific">Thermococcus onnurineus (strain NA1)</name>
    <dbReference type="NCBI Taxonomy" id="523850"/>
    <lineage>
        <taxon>Archaea</taxon>
        <taxon>Methanobacteriati</taxon>
        <taxon>Methanobacteriota</taxon>
        <taxon>Thermococci</taxon>
        <taxon>Thermococcales</taxon>
        <taxon>Thermococcaceae</taxon>
        <taxon>Thermococcus</taxon>
    </lineage>
</organism>
<protein>
    <recommendedName>
        <fullName evidence="1">Putative nickel-responsive regulator</fullName>
    </recommendedName>
</protein>
<feature type="chain" id="PRO_1000125843" description="Putative nickel-responsive regulator">
    <location>
        <begin position="1"/>
        <end position="138"/>
    </location>
</feature>
<feature type="binding site" evidence="1">
    <location>
        <position position="78"/>
    </location>
    <ligand>
        <name>Ni(2+)</name>
        <dbReference type="ChEBI" id="CHEBI:49786"/>
    </ligand>
</feature>
<feature type="binding site" evidence="1">
    <location>
        <position position="89"/>
    </location>
    <ligand>
        <name>Ni(2+)</name>
        <dbReference type="ChEBI" id="CHEBI:49786"/>
    </ligand>
</feature>
<feature type="binding site" evidence="1">
    <location>
        <position position="91"/>
    </location>
    <ligand>
        <name>Ni(2+)</name>
        <dbReference type="ChEBI" id="CHEBI:49786"/>
    </ligand>
</feature>
<feature type="binding site" evidence="1">
    <location>
        <position position="97"/>
    </location>
    <ligand>
        <name>Ni(2+)</name>
        <dbReference type="ChEBI" id="CHEBI:49786"/>
    </ligand>
</feature>
<gene>
    <name type="ordered locus">TON_0150</name>
</gene>
<keyword id="KW-0238">DNA-binding</keyword>
<keyword id="KW-0479">Metal-binding</keyword>
<keyword id="KW-0533">Nickel</keyword>
<keyword id="KW-0804">Transcription</keyword>
<keyword id="KW-0805">Transcription regulation</keyword>
<reference key="1">
    <citation type="journal article" date="2008" name="J. Bacteriol.">
        <title>The complete genome sequence of Thermococcus onnurineus NA1 reveals a mixed heterotrophic and carboxydotrophic metabolism.</title>
        <authorList>
            <person name="Lee H.S."/>
            <person name="Kang S.G."/>
            <person name="Bae S.S."/>
            <person name="Lim J.K."/>
            <person name="Cho Y."/>
            <person name="Kim Y.J."/>
            <person name="Jeon J.H."/>
            <person name="Cha S.-S."/>
            <person name="Kwon K.K."/>
            <person name="Kim H.-T."/>
            <person name="Park C.-J."/>
            <person name="Lee H.-W."/>
            <person name="Kim S.I."/>
            <person name="Chun J."/>
            <person name="Colwell R.R."/>
            <person name="Kim S.-J."/>
            <person name="Lee J.-H."/>
        </authorList>
    </citation>
    <scope>NUCLEOTIDE SEQUENCE [LARGE SCALE GENOMIC DNA]</scope>
    <source>
        <strain>NA1</strain>
    </source>
</reference>
<comment type="function">
    <text evidence="1">Transcriptional regulator.</text>
</comment>
<comment type="cofactor">
    <cofactor evidence="1">
        <name>Ni(2+)</name>
        <dbReference type="ChEBI" id="CHEBI:49786"/>
    </cofactor>
    <text evidence="1">Binds 1 nickel ion per subunit.</text>
</comment>
<comment type="similarity">
    <text evidence="1">Belongs to the transcriptional regulatory CopG/NikR family.</text>
</comment>